<reference key="1">
    <citation type="journal article" date="2000" name="Nature">
        <title>Sequence and analysis of chromosome 1 of the plant Arabidopsis thaliana.</title>
        <authorList>
            <person name="Theologis A."/>
            <person name="Ecker J.R."/>
            <person name="Palm C.J."/>
            <person name="Federspiel N.A."/>
            <person name="Kaul S."/>
            <person name="White O."/>
            <person name="Alonso J."/>
            <person name="Altafi H."/>
            <person name="Araujo R."/>
            <person name="Bowman C.L."/>
            <person name="Brooks S.Y."/>
            <person name="Buehler E."/>
            <person name="Chan A."/>
            <person name="Chao Q."/>
            <person name="Chen H."/>
            <person name="Cheuk R.F."/>
            <person name="Chin C.W."/>
            <person name="Chung M.K."/>
            <person name="Conn L."/>
            <person name="Conway A.B."/>
            <person name="Conway A.R."/>
            <person name="Creasy T.H."/>
            <person name="Dewar K."/>
            <person name="Dunn P."/>
            <person name="Etgu P."/>
            <person name="Feldblyum T.V."/>
            <person name="Feng J.-D."/>
            <person name="Fong B."/>
            <person name="Fujii C.Y."/>
            <person name="Gill J.E."/>
            <person name="Goldsmith A.D."/>
            <person name="Haas B."/>
            <person name="Hansen N.F."/>
            <person name="Hughes B."/>
            <person name="Huizar L."/>
            <person name="Hunter J.L."/>
            <person name="Jenkins J."/>
            <person name="Johnson-Hopson C."/>
            <person name="Khan S."/>
            <person name="Khaykin E."/>
            <person name="Kim C.J."/>
            <person name="Koo H.L."/>
            <person name="Kremenetskaia I."/>
            <person name="Kurtz D.B."/>
            <person name="Kwan A."/>
            <person name="Lam B."/>
            <person name="Langin-Hooper S."/>
            <person name="Lee A."/>
            <person name="Lee J.M."/>
            <person name="Lenz C.A."/>
            <person name="Li J.H."/>
            <person name="Li Y.-P."/>
            <person name="Lin X."/>
            <person name="Liu S.X."/>
            <person name="Liu Z.A."/>
            <person name="Luros J.S."/>
            <person name="Maiti R."/>
            <person name="Marziali A."/>
            <person name="Militscher J."/>
            <person name="Miranda M."/>
            <person name="Nguyen M."/>
            <person name="Nierman W.C."/>
            <person name="Osborne B.I."/>
            <person name="Pai G."/>
            <person name="Peterson J."/>
            <person name="Pham P.K."/>
            <person name="Rizzo M."/>
            <person name="Rooney T."/>
            <person name="Rowley D."/>
            <person name="Sakano H."/>
            <person name="Salzberg S.L."/>
            <person name="Schwartz J.R."/>
            <person name="Shinn P."/>
            <person name="Southwick A.M."/>
            <person name="Sun H."/>
            <person name="Tallon L.J."/>
            <person name="Tambunga G."/>
            <person name="Toriumi M.J."/>
            <person name="Town C.D."/>
            <person name="Utterback T."/>
            <person name="Van Aken S."/>
            <person name="Vaysberg M."/>
            <person name="Vysotskaia V.S."/>
            <person name="Walker M."/>
            <person name="Wu D."/>
            <person name="Yu G."/>
            <person name="Fraser C.M."/>
            <person name="Venter J.C."/>
            <person name="Davis R.W."/>
        </authorList>
    </citation>
    <scope>NUCLEOTIDE SEQUENCE [LARGE SCALE GENOMIC DNA]</scope>
    <source>
        <strain>cv. Columbia</strain>
    </source>
</reference>
<reference key="2">
    <citation type="journal article" date="2017" name="Plant J.">
        <title>Araport11: a complete reannotation of the Arabidopsis thaliana reference genome.</title>
        <authorList>
            <person name="Cheng C.Y."/>
            <person name="Krishnakumar V."/>
            <person name="Chan A.P."/>
            <person name="Thibaud-Nissen F."/>
            <person name="Schobel S."/>
            <person name="Town C.D."/>
        </authorList>
    </citation>
    <scope>GENOME REANNOTATION</scope>
    <source>
        <strain>cv. Columbia</strain>
    </source>
</reference>
<reference key="3">
    <citation type="journal article" date="2012" name="Plant Physiol.">
        <title>The TOPLESS interactome: a framework for gene repression in Arabidopsis.</title>
        <authorList>
            <person name="Causier B."/>
            <person name="Ashworth M."/>
            <person name="Guo W."/>
            <person name="Davies B."/>
        </authorList>
    </citation>
    <scope>INTERACTION WITH TPR3</scope>
</reference>
<reference key="4">
    <citation type="journal article" date="2013" name="Nature">
        <title>DWARF 53 acts as a repressor of strigolactone signalling in rice.</title>
        <authorList>
            <person name="Jiang L."/>
            <person name="Liu X."/>
            <person name="Xiong G."/>
            <person name="Liu H."/>
            <person name="Chen F."/>
            <person name="Wang L."/>
            <person name="Meng X."/>
            <person name="Liu G."/>
            <person name="Yu H."/>
            <person name="Yuan Y."/>
            <person name="Yi W."/>
            <person name="Zhao L."/>
            <person name="Ma H."/>
            <person name="He Y."/>
            <person name="Wu Z."/>
            <person name="Melcher K."/>
            <person name="Qian Q."/>
            <person name="Xu H.E."/>
            <person name="Wang Y."/>
            <person name="Li J."/>
        </authorList>
    </citation>
    <scope>IDENTIFICATION</scope>
</reference>
<reference key="5">
    <citation type="journal article" date="2013" name="Plant Physiol.">
        <title>SUPPRESSOR OF MORE AXILLARY GROWTH2 1 controls seed germination and seedling development in Arabidopsis.</title>
        <authorList>
            <person name="Stanga J.P."/>
            <person name="Smith S.M."/>
            <person name="Briggs W.R."/>
            <person name="Nelson D.C."/>
        </authorList>
    </citation>
    <scope>INDUCTION BY STRIGOLACTONE</scope>
    <scope>GENE FAMILY</scope>
    <scope>NOMENCLATURE</scope>
</reference>
<reference key="6">
    <citation type="journal article" date="2014" name="Curr. Opin. Plant Biol.">
        <title>Strigolactone signalling: standing on the shoulders of DWARFs.</title>
        <authorList>
            <person name="Bennett T."/>
            <person name="Leyser O."/>
        </authorList>
    </citation>
    <scope>REVIEW</scope>
</reference>
<reference key="7">
    <citation type="journal article" date="2015" name="Plant Cell">
        <title>Strigolactone signaling in Arabidopsis regulates shoot development by targeting D53-like SMXL repressor proteins for ubiquitination and degradation.</title>
        <authorList>
            <person name="Wang L."/>
            <person name="Wang B."/>
            <person name="Jiang L."/>
            <person name="Liu X."/>
            <person name="Li X."/>
            <person name="Lu Z."/>
            <person name="Meng X."/>
            <person name="Wang Y."/>
            <person name="Smith S.M."/>
            <person name="Li J."/>
        </authorList>
    </citation>
    <scope>FUNCTION</scope>
    <scope>MUTAGENESIS OF 706-ARG--THR-709 AND 833-LEU--PRO-838</scope>
    <scope>UBIQUITINATION</scope>
    <scope>SUBCELLULAR LOCATION</scope>
    <scope>INTERACTION WITH MAX2; TPR2 AND D14</scope>
</reference>
<reference key="8">
    <citation type="journal article" date="2015" name="Plant Cell">
        <title>SMAX1-LIKE/D53 family members enable distinct MAX2-dependent responses to strigolactones and karrikins in Arabidopsis.</title>
        <authorList>
            <person name="Soundappan I."/>
            <person name="Bennett T."/>
            <person name="Morffy N."/>
            <person name="Liang Y."/>
            <person name="Stanga J.P."/>
            <person name="Abbas A."/>
            <person name="Leyser O."/>
            <person name="Nelson D.C."/>
        </authorList>
    </citation>
    <scope>FUNCTION</scope>
    <scope>DISRUPTION PHENOTYPE</scope>
    <scope>TISSUE SPECIFICITY</scope>
</reference>
<reference key="9">
    <citation type="journal article" date="2015" name="Plant Cell Physiol.">
        <title>Structural requirements of strigolactones for shoot branching inhibition in rice and Arabidopsis.</title>
        <authorList>
            <person name="Umehara M."/>
            <person name="Cao M."/>
            <person name="Akiyama K."/>
            <person name="Akatsu T."/>
            <person name="Seto Y."/>
            <person name="Hanada A."/>
            <person name="Li W."/>
            <person name="Takeda-Kamiya N."/>
            <person name="Morimoto Y."/>
            <person name="Yamaguchi S."/>
        </authorList>
    </citation>
    <scope>INTERACTION WITH D14</scope>
</reference>
<name>SMXL6_ARATH</name>
<protein>
    <recommendedName>
        <fullName evidence="7">Protein SMAX1-LIKE 6</fullName>
        <shortName evidence="7">AtSMXL6</shortName>
    </recommendedName>
    <alternativeName>
        <fullName evidence="8">Protein D53-like 2</fullName>
        <shortName evidence="8">AtD53-like 2</shortName>
    </alternativeName>
    <alternativeName>
        <fullName evidence="9">Protein D53-like SMXL 6</fullName>
    </alternativeName>
</protein>
<accession>Q9LML2</accession>
<dbReference type="EMBL" id="AC067971">
    <property type="protein sequence ID" value="AAF82200.1"/>
    <property type="molecule type" value="Genomic_DNA"/>
</dbReference>
<dbReference type="EMBL" id="CP002684">
    <property type="protein sequence ID" value="AEE28092.1"/>
    <property type="molecule type" value="Genomic_DNA"/>
</dbReference>
<dbReference type="PIR" id="B86207">
    <property type="entry name" value="B86207"/>
</dbReference>
<dbReference type="RefSeq" id="NP_001077474.1">
    <molecule id="Q9LML2-1"/>
    <property type="nucleotide sequence ID" value="NM_001084005.3"/>
</dbReference>
<dbReference type="FunCoup" id="Q9LML2">
    <property type="interactions" value="788"/>
</dbReference>
<dbReference type="STRING" id="3702.Q9LML2"/>
<dbReference type="PaxDb" id="3702-AT1G07200.2"/>
<dbReference type="ProteomicsDB" id="232624">
    <molecule id="Q9LML2-1"/>
</dbReference>
<dbReference type="EnsemblPlants" id="AT1G07200.2">
    <molecule id="Q9LML2-1"/>
    <property type="protein sequence ID" value="AT1G07200.2"/>
    <property type="gene ID" value="AT1G07200"/>
</dbReference>
<dbReference type="GeneID" id="837231"/>
<dbReference type="Gramene" id="AT1G07200.2">
    <molecule id="Q9LML2-1"/>
    <property type="protein sequence ID" value="AT1G07200.2"/>
    <property type="gene ID" value="AT1G07200"/>
</dbReference>
<dbReference type="KEGG" id="ath:AT1G07200"/>
<dbReference type="Araport" id="AT1G07200"/>
<dbReference type="TAIR" id="AT1G07200">
    <property type="gene designation" value="SMXL6"/>
</dbReference>
<dbReference type="eggNOG" id="KOG1051">
    <property type="taxonomic scope" value="Eukaryota"/>
</dbReference>
<dbReference type="HOGENOM" id="CLU_006575_0_2_1"/>
<dbReference type="InParanoid" id="Q9LML2"/>
<dbReference type="OMA" id="PCNDRCE"/>
<dbReference type="PhylomeDB" id="Q9LML2"/>
<dbReference type="PRO" id="PR:Q9LML2"/>
<dbReference type="Proteomes" id="UP000006548">
    <property type="component" value="Chromosome 1"/>
</dbReference>
<dbReference type="ExpressionAtlas" id="Q9LML2">
    <property type="expression patterns" value="baseline and differential"/>
</dbReference>
<dbReference type="GO" id="GO:0005634">
    <property type="term" value="C:nucleus"/>
    <property type="evidence" value="ECO:0007669"/>
    <property type="project" value="UniProtKB-SubCell"/>
</dbReference>
<dbReference type="GO" id="GO:0005524">
    <property type="term" value="F:ATP binding"/>
    <property type="evidence" value="ECO:0007669"/>
    <property type="project" value="InterPro"/>
</dbReference>
<dbReference type="GO" id="GO:0016887">
    <property type="term" value="F:ATP hydrolysis activity"/>
    <property type="evidence" value="ECO:0007669"/>
    <property type="project" value="InterPro"/>
</dbReference>
<dbReference type="GO" id="GO:1902347">
    <property type="term" value="P:response to strigolactone"/>
    <property type="evidence" value="ECO:0000315"/>
    <property type="project" value="TAIR"/>
</dbReference>
<dbReference type="CDD" id="cd19499">
    <property type="entry name" value="RecA-like_ClpB_Hsp104-like"/>
    <property type="match status" value="1"/>
</dbReference>
<dbReference type="FunFam" id="3.40.50.300:FF:005555">
    <property type="entry name" value="Protein SMAX1-LIKE 6"/>
    <property type="match status" value="1"/>
</dbReference>
<dbReference type="Gene3D" id="1.10.1780.10">
    <property type="entry name" value="Clp, N-terminal domain"/>
    <property type="match status" value="1"/>
</dbReference>
<dbReference type="Gene3D" id="3.40.50.300">
    <property type="entry name" value="P-loop containing nucleotide triphosphate hydrolases"/>
    <property type="match status" value="1"/>
</dbReference>
<dbReference type="InterPro" id="IPR003959">
    <property type="entry name" value="ATPase_AAA_core"/>
</dbReference>
<dbReference type="InterPro" id="IPR036628">
    <property type="entry name" value="Clp_N_dom_sf"/>
</dbReference>
<dbReference type="InterPro" id="IPR004176">
    <property type="entry name" value="Clp_R_dom"/>
</dbReference>
<dbReference type="InterPro" id="IPR027417">
    <property type="entry name" value="P-loop_NTPase"/>
</dbReference>
<dbReference type="InterPro" id="IPR051650">
    <property type="entry name" value="SL_signaling_regulator"/>
</dbReference>
<dbReference type="PANTHER" id="PTHR43572">
    <property type="entry name" value="CHAPERONE PROTEIN CLPD, CHLOROPLASTIC"/>
    <property type="match status" value="1"/>
</dbReference>
<dbReference type="PANTHER" id="PTHR43572:SF38">
    <property type="entry name" value="PROTEIN SMAX1-LIKE 6"/>
    <property type="match status" value="1"/>
</dbReference>
<dbReference type="Pfam" id="PF07724">
    <property type="entry name" value="AAA_2"/>
    <property type="match status" value="1"/>
</dbReference>
<dbReference type="SUPFAM" id="SSF81923">
    <property type="entry name" value="Double Clp-N motif"/>
    <property type="match status" value="1"/>
</dbReference>
<dbReference type="SUPFAM" id="SSF52540">
    <property type="entry name" value="P-loop containing nucleoside triphosphate hydrolases"/>
    <property type="match status" value="1"/>
</dbReference>
<dbReference type="PROSITE" id="PS51903">
    <property type="entry name" value="CLP_R"/>
    <property type="match status" value="1"/>
</dbReference>
<sequence>MPTPVTTARECLTEEAARALDDAVVVARRRSHAQTTSLHAVSALLAMPSSILREVCVSRAARSVPYSSRLQFRALELCVGVSLDRLPSSKSPATEEDPPVSNSLMAAIKRSQANQRRHPESYHLQQIHASNNGGGGCQTTVLKVELKYFILSILDDPIVNRVFGEAGFRSSEIKLDVLHPPVTQLSSRFSRGRCPPLFLCNLPNSDPNREFPFSGSSGFDENSRRIGEVLGRKDKKNPLLIGNCANEALKTFTDSINSGKLGFLQMDISGLSLISIEKEISEILADGSKNEEEIRMKVDDLGRTVEQSGSKSGIVLNLGELKVLTSEANAALEILVSKLSDLLKHESKQLSFIGCVSSNETYTKLIDRFPTIEKDWDLHVLPITASTKPSTQGVYPKSSLMGSFVPFGGFFSSTSNFRVPLSSTVNQTLSRCHLCNEKYLQEVAAVLKAGSSLSLADKCSEKLAPWLRAIETKEDKGITGSSKALDDANTSASQTAALQKKWDNICQSIHHTPAFPKLGFQSVSPQFPVQTEKSVRTPTSYLETPKLLNPPISKPKPMEDLTASVTNRTVSLPLSCVTTDFGLGVIYASKNQESKTTREKPMLVTLNSSLEHTYQKDFKSLREILSRKVAWQTEAVNAISQIICGCKTDSTRRNQASGIWLALLGPDKVGKKKVAMTLSEVFFGGKVNYICVDFGAEHCSLDDKFRGKTVVDYVTGELSRKPHSVVLLENVEKAEFPDQMRLSEAVSTGKIRDLHGRVISMKNVIVVVTSGIAKDNATDHVIKPVKFPEEQVLSARSWKLQIKLGDATKFGVNKRKYELETAQRAVKVQRSYLDLNLPVNETEFSPDHEAEDRDAWFDEFIEKVDGKVTFKPVDFDELAKNIQEKIGSHFERCFGSETHLELDKEVILQILAASWSSLSSGEEEGRTIVDQWMQTVLARSFAEAKQKYGSNPMLGVKLVASSSGLASGVELPAKVDVIW</sequence>
<gene>
    <name evidence="7" type="primary">SMXL6</name>
    <name evidence="12" type="ordered locus">At1g07200</name>
    <name evidence="13" type="ORF">F10K1.9</name>
</gene>
<feature type="chain" id="PRO_0000435715" description="Protein SMAX1-LIKE 6">
    <location>
        <begin position="1"/>
        <end position="979"/>
    </location>
</feature>
<feature type="domain" description="Clp R" evidence="1">
    <location>
        <begin position="8"/>
        <end position="190"/>
    </location>
</feature>
<feature type="region of interest" description="Repeat 1" evidence="1">
    <location>
        <begin position="12"/>
        <end position="86"/>
    </location>
</feature>
<feature type="region of interest" description="Repeat 2" evidence="1">
    <location>
        <begin position="100"/>
        <end position="190"/>
    </location>
</feature>
<feature type="short sequence motif" description="EAR" evidence="11">
    <location>
        <begin position="833"/>
        <end position="837"/>
    </location>
</feature>
<feature type="mutagenesis site" description="In smxl6d; decreased ubiquitination and increased resistance to degradation." evidence="5">
    <location>
        <begin position="706"/>
        <end position="709"/>
    </location>
</feature>
<feature type="mutagenesis site" description="Loss of interaction with TPR2." evidence="5">
    <location>
        <begin position="833"/>
        <end position="838"/>
    </location>
</feature>
<organism>
    <name type="scientific">Arabidopsis thaliana</name>
    <name type="common">Mouse-ear cress</name>
    <dbReference type="NCBI Taxonomy" id="3702"/>
    <lineage>
        <taxon>Eukaryota</taxon>
        <taxon>Viridiplantae</taxon>
        <taxon>Streptophyta</taxon>
        <taxon>Embryophyta</taxon>
        <taxon>Tracheophyta</taxon>
        <taxon>Spermatophyta</taxon>
        <taxon>Magnoliopsida</taxon>
        <taxon>eudicotyledons</taxon>
        <taxon>Gunneridae</taxon>
        <taxon>Pentapetalae</taxon>
        <taxon>rosids</taxon>
        <taxon>malvids</taxon>
        <taxon>Brassicales</taxon>
        <taxon>Brassicaceae</taxon>
        <taxon>Camelineae</taxon>
        <taxon>Arabidopsis</taxon>
    </lineage>
</organism>
<comment type="function">
    <text evidence="5 6">Probable component of a transcriptional corepressor complex involved in branching control. Regulates cotyledon expansion and lateral root growth, but not germination or hypocotyl elongation. Promotes auxin transport and PIN1 accumulation in the stem and represses BRC1/TCP18 expression in axillary buds (PubMed:26546446, PubMed:26546447).</text>
</comment>
<comment type="subunit">
    <text evidence="2 4 5">Interacts with TPL/TPR in an EAR-motif dependent manner (PubMed:22065421). Interacts with TPR3 (PubMed:22065421). Interacts with MAX2 and TPR2 (PubMed:26546446). Interacts with D14 (PubMed:25713176, PubMed:26546446). The interaction with D14 occurs in the presence of (2'R) stereoisomers of strigolactones, but not (2'S) stereoisomers (PubMed:25713176).</text>
</comment>
<comment type="subcellular location">
    <subcellularLocation>
        <location evidence="5">Nucleus</location>
    </subcellularLocation>
</comment>
<comment type="alternative products">
    <event type="alternative splicing"/>
    <isoform>
        <id>Q9LML2-1</id>
        <name>1</name>
        <sequence type="displayed"/>
    </isoform>
    <text>Additional isoforms seem to exist.</text>
</comment>
<comment type="tissue specificity">
    <text evidence="3 6">Detected in roots, seedlings and axillary branches (PubMed:23893171). Expressed in the primary rosette buds and expanding leaves of adult rosettes, the vasculature of the hypocotyls, cotyledons, and mature roots, and in the midvein and petioles of young leaves (PubMed:26546447).</text>
</comment>
<comment type="induction">
    <text evidence="3">Up-regulated by strigolactone treatment.</text>
</comment>
<comment type="domain">
    <text evidence="5">Contains 1 EAR motif required for the interaction with TPR2.</text>
</comment>
<comment type="PTM">
    <text evidence="5 6">Ubiquitinated upon strigolactone treatment (PubMed:26546446). Probable proteolytic target of SCF(MAX2)-mediated stigolactone signaling (PubMed:26546447).</text>
</comment>
<comment type="disruption phenotype">
    <text evidence="6">No visible phenotype. Suppresses max2 phenotypes associated with strigolactone-D14-regulated growth. Smxl6 and max2 double mutants have branching and inflorescence heights similar to max2 mutants.</text>
</comment>
<comment type="similarity">
    <text evidence="10">Belongs to the ClpA/ClpB family.</text>
</comment>
<evidence type="ECO:0000255" key="1">
    <source>
        <dbReference type="PROSITE-ProRule" id="PRU01251"/>
    </source>
</evidence>
<evidence type="ECO:0000269" key="2">
    <source>
    </source>
</evidence>
<evidence type="ECO:0000269" key="3">
    <source>
    </source>
</evidence>
<evidence type="ECO:0000269" key="4">
    <source>
    </source>
</evidence>
<evidence type="ECO:0000269" key="5">
    <source>
    </source>
</evidence>
<evidence type="ECO:0000269" key="6">
    <source>
    </source>
</evidence>
<evidence type="ECO:0000303" key="7">
    <source>
    </source>
</evidence>
<evidence type="ECO:0000303" key="8">
    <source>
    </source>
</evidence>
<evidence type="ECO:0000303" key="9">
    <source>
    </source>
</evidence>
<evidence type="ECO:0000305" key="10"/>
<evidence type="ECO:0000305" key="11">
    <source>
    </source>
</evidence>
<evidence type="ECO:0000312" key="12">
    <source>
        <dbReference type="Araport" id="AT1G07200"/>
    </source>
</evidence>
<evidence type="ECO:0000312" key="13">
    <source>
        <dbReference type="EMBL" id="AAF82200.1"/>
    </source>
</evidence>
<keyword id="KW-0025">Alternative splicing</keyword>
<keyword id="KW-0539">Nucleus</keyword>
<keyword id="KW-1185">Reference proteome</keyword>
<keyword id="KW-0677">Repeat</keyword>
<keyword id="KW-0804">Transcription</keyword>
<keyword id="KW-0805">Transcription regulation</keyword>
<keyword id="KW-0832">Ubl conjugation</keyword>
<proteinExistence type="evidence at protein level"/>